<proteinExistence type="inferred from homology"/>
<gene>
    <name evidence="1" type="primary">thiE</name>
    <name type="ordered locus">Mmcs_0544</name>
</gene>
<comment type="function">
    <text evidence="1">Condenses 4-methyl-5-(beta-hydroxyethyl)thiazole monophosphate (THZ-P) and 2-methyl-4-amino-5-hydroxymethyl pyrimidine pyrophosphate (HMP-PP) to form thiamine monophosphate (TMP).</text>
</comment>
<comment type="catalytic activity">
    <reaction evidence="1">
        <text>2-[(2R,5Z)-2-carboxy-4-methylthiazol-5(2H)-ylidene]ethyl phosphate + 4-amino-2-methyl-5-(diphosphooxymethyl)pyrimidine + 2 H(+) = thiamine phosphate + CO2 + diphosphate</text>
        <dbReference type="Rhea" id="RHEA:47844"/>
        <dbReference type="ChEBI" id="CHEBI:15378"/>
        <dbReference type="ChEBI" id="CHEBI:16526"/>
        <dbReference type="ChEBI" id="CHEBI:33019"/>
        <dbReference type="ChEBI" id="CHEBI:37575"/>
        <dbReference type="ChEBI" id="CHEBI:57841"/>
        <dbReference type="ChEBI" id="CHEBI:62899"/>
        <dbReference type="EC" id="2.5.1.3"/>
    </reaction>
</comment>
<comment type="catalytic activity">
    <reaction evidence="1">
        <text>2-(2-carboxy-4-methylthiazol-5-yl)ethyl phosphate + 4-amino-2-methyl-5-(diphosphooxymethyl)pyrimidine + 2 H(+) = thiamine phosphate + CO2 + diphosphate</text>
        <dbReference type="Rhea" id="RHEA:47848"/>
        <dbReference type="ChEBI" id="CHEBI:15378"/>
        <dbReference type="ChEBI" id="CHEBI:16526"/>
        <dbReference type="ChEBI" id="CHEBI:33019"/>
        <dbReference type="ChEBI" id="CHEBI:37575"/>
        <dbReference type="ChEBI" id="CHEBI:57841"/>
        <dbReference type="ChEBI" id="CHEBI:62890"/>
        <dbReference type="EC" id="2.5.1.3"/>
    </reaction>
</comment>
<comment type="catalytic activity">
    <reaction evidence="1">
        <text>4-methyl-5-(2-phosphooxyethyl)-thiazole + 4-amino-2-methyl-5-(diphosphooxymethyl)pyrimidine + H(+) = thiamine phosphate + diphosphate</text>
        <dbReference type="Rhea" id="RHEA:22328"/>
        <dbReference type="ChEBI" id="CHEBI:15378"/>
        <dbReference type="ChEBI" id="CHEBI:33019"/>
        <dbReference type="ChEBI" id="CHEBI:37575"/>
        <dbReference type="ChEBI" id="CHEBI:57841"/>
        <dbReference type="ChEBI" id="CHEBI:58296"/>
        <dbReference type="EC" id="2.5.1.3"/>
    </reaction>
</comment>
<comment type="cofactor">
    <cofactor evidence="1">
        <name>Mg(2+)</name>
        <dbReference type="ChEBI" id="CHEBI:18420"/>
    </cofactor>
    <text evidence="1">Binds 1 Mg(2+) ion per subunit.</text>
</comment>
<comment type="pathway">
    <text evidence="1">Cofactor biosynthesis; thiamine diphosphate biosynthesis; thiamine phosphate from 4-amino-2-methyl-5-diphosphomethylpyrimidine and 4-methyl-5-(2-phosphoethyl)-thiazole: step 1/1.</text>
</comment>
<comment type="similarity">
    <text evidence="1">Belongs to the thiamine-phosphate synthase family.</text>
</comment>
<reference key="1">
    <citation type="submission" date="2006-06" db="EMBL/GenBank/DDBJ databases">
        <title>Complete sequence of chromosome of Mycobacterium sp. MCS.</title>
        <authorList>
            <consortium name="US DOE Joint Genome Institute"/>
            <person name="Copeland A."/>
            <person name="Lucas S."/>
            <person name="Lapidus A."/>
            <person name="Barry K."/>
            <person name="Detter J.C."/>
            <person name="Glavina del Rio T."/>
            <person name="Hammon N."/>
            <person name="Israni S."/>
            <person name="Dalin E."/>
            <person name="Tice H."/>
            <person name="Pitluck S."/>
            <person name="Martinez M."/>
            <person name="Schmutz J."/>
            <person name="Larimer F."/>
            <person name="Land M."/>
            <person name="Hauser L."/>
            <person name="Kyrpides N."/>
            <person name="Kim E."/>
            <person name="Miller C.D."/>
            <person name="Hughes J.E."/>
            <person name="Anderson A.J."/>
            <person name="Sims R.C."/>
            <person name="Richardson P."/>
        </authorList>
    </citation>
    <scope>NUCLEOTIDE SEQUENCE [LARGE SCALE GENOMIC DNA]</scope>
    <source>
        <strain>MCS</strain>
    </source>
</reference>
<protein>
    <recommendedName>
        <fullName evidence="1">Thiamine-phosphate synthase</fullName>
        <shortName evidence="1">TP synthase</shortName>
        <shortName evidence="1">TPS</shortName>
        <ecNumber evidence="1">2.5.1.3</ecNumber>
    </recommendedName>
    <alternativeName>
        <fullName evidence="1">Thiamine-phosphate pyrophosphorylase</fullName>
        <shortName evidence="1">TMP pyrophosphorylase</shortName>
        <shortName evidence="1">TMP-PPase</shortName>
    </alternativeName>
</protein>
<sequence length="226" mass="23895">MREPLDPLGPALAQASLYLCTDARRERGDLAEFADAALAGGVDLIQLRDKGSAGERRFGPLEAREELAALEILAEAARRHGALLAVNDRADIALAAGADVLHLGQDDLPLPVARRIIGPSPLIGRSTHDSAQVAAAVAEEVDYFCVGPCWPTPTKPGREAPGLGLVREVASRATEKPWFAIGGIDEARLPEVLDAGARRIVVVRAITAADDPKAAARRLKDALVSR</sequence>
<accession>Q1BEL9</accession>
<evidence type="ECO:0000255" key="1">
    <source>
        <dbReference type="HAMAP-Rule" id="MF_00097"/>
    </source>
</evidence>
<feature type="chain" id="PRO_0000336411" description="Thiamine-phosphate synthase">
    <location>
        <begin position="1"/>
        <end position="226"/>
    </location>
</feature>
<feature type="binding site" evidence="1">
    <location>
        <begin position="46"/>
        <end position="50"/>
    </location>
    <ligand>
        <name>4-amino-2-methyl-5-(diphosphooxymethyl)pyrimidine</name>
        <dbReference type="ChEBI" id="CHEBI:57841"/>
    </ligand>
</feature>
<feature type="binding site" evidence="1">
    <location>
        <position position="87"/>
    </location>
    <ligand>
        <name>4-amino-2-methyl-5-(diphosphooxymethyl)pyrimidine</name>
        <dbReference type="ChEBI" id="CHEBI:57841"/>
    </ligand>
</feature>
<feature type="binding site" evidence="1">
    <location>
        <position position="88"/>
    </location>
    <ligand>
        <name>Mg(2+)</name>
        <dbReference type="ChEBI" id="CHEBI:18420"/>
    </ligand>
</feature>
<feature type="binding site" evidence="1">
    <location>
        <position position="107"/>
    </location>
    <ligand>
        <name>Mg(2+)</name>
        <dbReference type="ChEBI" id="CHEBI:18420"/>
    </ligand>
</feature>
<feature type="binding site" evidence="1">
    <location>
        <position position="126"/>
    </location>
    <ligand>
        <name>4-amino-2-methyl-5-(diphosphooxymethyl)pyrimidine</name>
        <dbReference type="ChEBI" id="CHEBI:57841"/>
    </ligand>
</feature>
<feature type="binding site" evidence="1">
    <location>
        <begin position="152"/>
        <end position="154"/>
    </location>
    <ligand>
        <name>2-[(2R,5Z)-2-carboxy-4-methylthiazol-5(2H)-ylidene]ethyl phosphate</name>
        <dbReference type="ChEBI" id="CHEBI:62899"/>
    </ligand>
</feature>
<feature type="binding site" evidence="1">
    <location>
        <position position="155"/>
    </location>
    <ligand>
        <name>4-amino-2-methyl-5-(diphosphooxymethyl)pyrimidine</name>
        <dbReference type="ChEBI" id="CHEBI:57841"/>
    </ligand>
</feature>
<feature type="binding site" evidence="1">
    <location>
        <position position="183"/>
    </location>
    <ligand>
        <name>2-[(2R,5Z)-2-carboxy-4-methylthiazol-5(2H)-ylidene]ethyl phosphate</name>
        <dbReference type="ChEBI" id="CHEBI:62899"/>
    </ligand>
</feature>
<dbReference type="EC" id="2.5.1.3" evidence="1"/>
<dbReference type="EMBL" id="CP000384">
    <property type="protein sequence ID" value="ABG06665.1"/>
    <property type="molecule type" value="Genomic_DNA"/>
</dbReference>
<dbReference type="SMR" id="Q1BEL9"/>
<dbReference type="KEGG" id="mmc:Mmcs_0544"/>
<dbReference type="HOGENOM" id="CLU_018272_3_0_11"/>
<dbReference type="BioCyc" id="MSP164756:G1G6O-556-MONOMER"/>
<dbReference type="UniPathway" id="UPA00060">
    <property type="reaction ID" value="UER00141"/>
</dbReference>
<dbReference type="GO" id="GO:0005737">
    <property type="term" value="C:cytoplasm"/>
    <property type="evidence" value="ECO:0007669"/>
    <property type="project" value="TreeGrafter"/>
</dbReference>
<dbReference type="GO" id="GO:0000287">
    <property type="term" value="F:magnesium ion binding"/>
    <property type="evidence" value="ECO:0007669"/>
    <property type="project" value="UniProtKB-UniRule"/>
</dbReference>
<dbReference type="GO" id="GO:0004789">
    <property type="term" value="F:thiamine-phosphate diphosphorylase activity"/>
    <property type="evidence" value="ECO:0007669"/>
    <property type="project" value="UniProtKB-UniRule"/>
</dbReference>
<dbReference type="GO" id="GO:0009228">
    <property type="term" value="P:thiamine biosynthetic process"/>
    <property type="evidence" value="ECO:0007669"/>
    <property type="project" value="UniProtKB-KW"/>
</dbReference>
<dbReference type="GO" id="GO:0009229">
    <property type="term" value="P:thiamine diphosphate biosynthetic process"/>
    <property type="evidence" value="ECO:0007669"/>
    <property type="project" value="UniProtKB-UniRule"/>
</dbReference>
<dbReference type="CDD" id="cd00564">
    <property type="entry name" value="TMP_TenI"/>
    <property type="match status" value="1"/>
</dbReference>
<dbReference type="FunFam" id="3.20.20.70:FF:000178">
    <property type="entry name" value="Thiamine-phosphate synthase"/>
    <property type="match status" value="1"/>
</dbReference>
<dbReference type="Gene3D" id="3.20.20.70">
    <property type="entry name" value="Aldolase class I"/>
    <property type="match status" value="1"/>
</dbReference>
<dbReference type="HAMAP" id="MF_00097">
    <property type="entry name" value="TMP_synthase"/>
    <property type="match status" value="1"/>
</dbReference>
<dbReference type="InterPro" id="IPR013785">
    <property type="entry name" value="Aldolase_TIM"/>
</dbReference>
<dbReference type="InterPro" id="IPR036206">
    <property type="entry name" value="ThiamineP_synth_sf"/>
</dbReference>
<dbReference type="InterPro" id="IPR022998">
    <property type="entry name" value="ThiamineP_synth_TenI"/>
</dbReference>
<dbReference type="InterPro" id="IPR034291">
    <property type="entry name" value="TMP_synthase"/>
</dbReference>
<dbReference type="NCBIfam" id="TIGR00693">
    <property type="entry name" value="thiE"/>
    <property type="match status" value="1"/>
</dbReference>
<dbReference type="PANTHER" id="PTHR20857">
    <property type="entry name" value="THIAMINE-PHOSPHATE PYROPHOSPHORYLASE"/>
    <property type="match status" value="1"/>
</dbReference>
<dbReference type="PANTHER" id="PTHR20857:SF15">
    <property type="entry name" value="THIAMINE-PHOSPHATE SYNTHASE"/>
    <property type="match status" value="1"/>
</dbReference>
<dbReference type="Pfam" id="PF02581">
    <property type="entry name" value="TMP-TENI"/>
    <property type="match status" value="1"/>
</dbReference>
<dbReference type="SUPFAM" id="SSF51391">
    <property type="entry name" value="Thiamin phosphate synthase"/>
    <property type="match status" value="1"/>
</dbReference>
<name>THIE_MYCSS</name>
<keyword id="KW-0460">Magnesium</keyword>
<keyword id="KW-0479">Metal-binding</keyword>
<keyword id="KW-0784">Thiamine biosynthesis</keyword>
<keyword id="KW-0808">Transferase</keyword>
<organism>
    <name type="scientific">Mycobacterium sp. (strain MCS)</name>
    <dbReference type="NCBI Taxonomy" id="164756"/>
    <lineage>
        <taxon>Bacteria</taxon>
        <taxon>Bacillati</taxon>
        <taxon>Actinomycetota</taxon>
        <taxon>Actinomycetes</taxon>
        <taxon>Mycobacteriales</taxon>
        <taxon>Mycobacteriaceae</taxon>
        <taxon>Mycobacterium</taxon>
    </lineage>
</organism>